<name>PSMD8_HUMAN</name>
<organism>
    <name type="scientific">Homo sapiens</name>
    <name type="common">Human</name>
    <dbReference type="NCBI Taxonomy" id="9606"/>
    <lineage>
        <taxon>Eukaryota</taxon>
        <taxon>Metazoa</taxon>
        <taxon>Chordata</taxon>
        <taxon>Craniata</taxon>
        <taxon>Vertebrata</taxon>
        <taxon>Euteleostomi</taxon>
        <taxon>Mammalia</taxon>
        <taxon>Eutheria</taxon>
        <taxon>Euarchontoglires</taxon>
        <taxon>Primates</taxon>
        <taxon>Haplorrhini</taxon>
        <taxon>Catarrhini</taxon>
        <taxon>Hominidae</taxon>
        <taxon>Homo</taxon>
    </lineage>
</organism>
<accession>P48556</accession>
<accession>B4DX18</accession>
<accession>Q6P1L7</accession>
<feature type="chain" id="PRO_0000173846" description="26S proteasome non-ATPase regulatory subunit 8">
    <location>
        <begin position="1"/>
        <end position="350"/>
    </location>
</feature>
<feature type="domain" description="PCI" evidence="2">
    <location>
        <begin position="162"/>
        <end position="331"/>
    </location>
</feature>
<feature type="region of interest" description="Disordered" evidence="3">
    <location>
        <begin position="1"/>
        <end position="24"/>
    </location>
</feature>
<feature type="modified residue" description="Phosphoserine" evidence="9">
    <location>
        <position position="106"/>
    </location>
</feature>
<feature type="cross-link" description="Glycyl lysine isopeptide (Lys-Gly) (interchain with G-Cter in SUMO2)" evidence="10">
    <location>
        <position position="297"/>
    </location>
</feature>
<feature type="helix" evidence="11">
    <location>
        <begin position="83"/>
        <end position="103"/>
    </location>
</feature>
<feature type="strand" evidence="11">
    <location>
        <begin position="104"/>
        <end position="106"/>
    </location>
</feature>
<feature type="helix" evidence="11">
    <location>
        <begin position="109"/>
        <end position="126"/>
    </location>
</feature>
<feature type="strand" evidence="11">
    <location>
        <begin position="128"/>
        <end position="130"/>
    </location>
</feature>
<feature type="strand" evidence="11">
    <location>
        <begin position="132"/>
        <end position="134"/>
    </location>
</feature>
<feature type="helix" evidence="11">
    <location>
        <begin position="138"/>
        <end position="158"/>
    </location>
</feature>
<feature type="helix" evidence="11">
    <location>
        <begin position="161"/>
        <end position="176"/>
    </location>
</feature>
<feature type="turn" evidence="11">
    <location>
        <begin position="177"/>
        <end position="181"/>
    </location>
</feature>
<feature type="helix" evidence="11">
    <location>
        <begin position="187"/>
        <end position="201"/>
    </location>
</feature>
<feature type="helix" evidence="11">
    <location>
        <begin position="205"/>
        <end position="214"/>
    </location>
</feature>
<feature type="helix" evidence="11">
    <location>
        <begin position="217"/>
        <end position="222"/>
    </location>
</feature>
<feature type="helix" evidence="11">
    <location>
        <begin position="224"/>
        <end position="238"/>
    </location>
</feature>
<feature type="helix" evidence="11">
    <location>
        <begin position="241"/>
        <end position="247"/>
    </location>
</feature>
<feature type="helix" evidence="11">
    <location>
        <begin position="248"/>
        <end position="250"/>
    </location>
</feature>
<feature type="helix" evidence="11">
    <location>
        <begin position="254"/>
        <end position="277"/>
    </location>
</feature>
<feature type="helix" evidence="11">
    <location>
        <begin position="284"/>
        <end position="290"/>
    </location>
</feature>
<feature type="helix" evidence="11">
    <location>
        <begin position="296"/>
        <end position="304"/>
    </location>
</feature>
<feature type="helix" evidence="11">
    <location>
        <begin position="319"/>
        <end position="322"/>
    </location>
</feature>
<feature type="strand" evidence="11">
    <location>
        <begin position="326"/>
        <end position="328"/>
    </location>
</feature>
<feature type="helix" evidence="11">
    <location>
        <begin position="333"/>
        <end position="345"/>
    </location>
</feature>
<gene>
    <name type="primary">PSMD8</name>
</gene>
<dbReference type="EMBL" id="AK301771">
    <property type="protein sequence ID" value="BAG63230.1"/>
    <property type="molecule type" value="mRNA"/>
</dbReference>
<dbReference type="EMBL" id="AC005789">
    <property type="protein sequence ID" value="AAC62833.1"/>
    <property type="status" value="ALT_SEQ"/>
    <property type="molecule type" value="Genomic_DNA"/>
</dbReference>
<dbReference type="EMBL" id="CH471126">
    <property type="protein sequence ID" value="EAW56785.1"/>
    <property type="molecule type" value="Genomic_DNA"/>
</dbReference>
<dbReference type="EMBL" id="BC001164">
    <property type="protein sequence ID" value="AAH01164.3"/>
    <property type="status" value="ALT_INIT"/>
    <property type="molecule type" value="mRNA"/>
</dbReference>
<dbReference type="EMBL" id="BC065006">
    <property type="protein sequence ID" value="AAH65006.2"/>
    <property type="status" value="ALT_INIT"/>
    <property type="molecule type" value="mRNA"/>
</dbReference>
<dbReference type="EMBL" id="D38047">
    <property type="protein sequence ID" value="BAA07237.1"/>
    <property type="status" value="ALT_INIT"/>
    <property type="molecule type" value="mRNA"/>
</dbReference>
<dbReference type="CCDS" id="CCDS12515.2"/>
<dbReference type="PIR" id="S56108">
    <property type="entry name" value="S56108"/>
</dbReference>
<dbReference type="RefSeq" id="NP_002803.2">
    <property type="nucleotide sequence ID" value="NM_002812.5"/>
</dbReference>
<dbReference type="PDB" id="5GJQ">
    <property type="method" value="EM"/>
    <property type="resolution" value="4.50 A"/>
    <property type="chains" value="T=1-350"/>
</dbReference>
<dbReference type="PDB" id="5GJR">
    <property type="method" value="EM"/>
    <property type="resolution" value="3.50 A"/>
    <property type="chains" value="7/T=1-350"/>
</dbReference>
<dbReference type="PDB" id="5L4K">
    <property type="method" value="EM"/>
    <property type="resolution" value="4.50 A"/>
    <property type="chains" value="T=1-350"/>
</dbReference>
<dbReference type="PDB" id="5LN3">
    <property type="method" value="EM"/>
    <property type="resolution" value="6.80 A"/>
    <property type="chains" value="T=1-350"/>
</dbReference>
<dbReference type="PDB" id="5M32">
    <property type="method" value="EM"/>
    <property type="resolution" value="3.80 A"/>
    <property type="chains" value="r=1-350"/>
</dbReference>
<dbReference type="PDB" id="5T0C">
    <property type="method" value="EM"/>
    <property type="resolution" value="3.80 A"/>
    <property type="chains" value="Ad/Bd=94-350"/>
</dbReference>
<dbReference type="PDB" id="5T0G">
    <property type="method" value="EM"/>
    <property type="resolution" value="4.40 A"/>
    <property type="chains" value="d=2-350"/>
</dbReference>
<dbReference type="PDB" id="5T0H">
    <property type="method" value="EM"/>
    <property type="resolution" value="6.80 A"/>
    <property type="chains" value="d=2-350"/>
</dbReference>
<dbReference type="PDB" id="5T0I">
    <property type="method" value="EM"/>
    <property type="resolution" value="8.00 A"/>
    <property type="chains" value="d=2-350"/>
</dbReference>
<dbReference type="PDB" id="5T0J">
    <property type="method" value="EM"/>
    <property type="resolution" value="8.00 A"/>
    <property type="chains" value="d=2-350"/>
</dbReference>
<dbReference type="PDB" id="5VFP">
    <property type="method" value="EM"/>
    <property type="resolution" value="4.20 A"/>
    <property type="chains" value="d=94-350"/>
</dbReference>
<dbReference type="PDB" id="5VFQ">
    <property type="method" value="EM"/>
    <property type="resolution" value="4.20 A"/>
    <property type="chains" value="d=94-350"/>
</dbReference>
<dbReference type="PDB" id="5VFR">
    <property type="method" value="EM"/>
    <property type="resolution" value="4.90 A"/>
    <property type="chains" value="d=94-350"/>
</dbReference>
<dbReference type="PDB" id="5VFS">
    <property type="method" value="EM"/>
    <property type="resolution" value="3.60 A"/>
    <property type="chains" value="d=94-350"/>
</dbReference>
<dbReference type="PDB" id="5VFT">
    <property type="method" value="EM"/>
    <property type="resolution" value="7.00 A"/>
    <property type="chains" value="d=94-350"/>
</dbReference>
<dbReference type="PDB" id="5VFU">
    <property type="method" value="EM"/>
    <property type="resolution" value="5.80 A"/>
    <property type="chains" value="d=94-350"/>
</dbReference>
<dbReference type="PDB" id="5VGZ">
    <property type="method" value="EM"/>
    <property type="resolution" value="3.70 A"/>
    <property type="chains" value="d=94-350"/>
</dbReference>
<dbReference type="PDB" id="5VHF">
    <property type="method" value="EM"/>
    <property type="resolution" value="5.70 A"/>
    <property type="chains" value="d=215-350"/>
</dbReference>
<dbReference type="PDB" id="5VHH">
    <property type="method" value="EM"/>
    <property type="resolution" value="6.10 A"/>
    <property type="chains" value="d=94-350"/>
</dbReference>
<dbReference type="PDB" id="5VHI">
    <property type="method" value="EM"/>
    <property type="resolution" value="6.80 A"/>
    <property type="chains" value="d=94-350"/>
</dbReference>
<dbReference type="PDB" id="5VHS">
    <property type="method" value="EM"/>
    <property type="resolution" value="8.80 A"/>
    <property type="chains" value="d=94-350"/>
</dbReference>
<dbReference type="PDB" id="6MSB">
    <property type="method" value="EM"/>
    <property type="resolution" value="3.00 A"/>
    <property type="chains" value="d=2-350"/>
</dbReference>
<dbReference type="PDB" id="6MSD">
    <property type="method" value="EM"/>
    <property type="resolution" value="3.20 A"/>
    <property type="chains" value="d=2-350"/>
</dbReference>
<dbReference type="PDB" id="6MSG">
    <property type="method" value="EM"/>
    <property type="resolution" value="3.50 A"/>
    <property type="chains" value="d=2-350"/>
</dbReference>
<dbReference type="PDB" id="6MSH">
    <property type="method" value="EM"/>
    <property type="resolution" value="3.60 A"/>
    <property type="chains" value="d=2-350"/>
</dbReference>
<dbReference type="PDB" id="6MSJ">
    <property type="method" value="EM"/>
    <property type="resolution" value="3.30 A"/>
    <property type="chains" value="d=2-350"/>
</dbReference>
<dbReference type="PDB" id="6MSK">
    <property type="method" value="EM"/>
    <property type="resolution" value="3.20 A"/>
    <property type="chains" value="d=2-350"/>
</dbReference>
<dbReference type="PDB" id="6WJD">
    <property type="method" value="EM"/>
    <property type="resolution" value="4.80 A"/>
    <property type="chains" value="d=2-350"/>
</dbReference>
<dbReference type="PDB" id="6WJN">
    <property type="method" value="EM"/>
    <property type="resolution" value="5.70 A"/>
    <property type="chains" value="d=94-350"/>
</dbReference>
<dbReference type="PDB" id="7QXN">
    <property type="method" value="EM"/>
    <property type="resolution" value="3.70 A"/>
    <property type="chains" value="d=2-350"/>
</dbReference>
<dbReference type="PDB" id="7QXP">
    <property type="method" value="EM"/>
    <property type="resolution" value="3.60 A"/>
    <property type="chains" value="d=2-350"/>
</dbReference>
<dbReference type="PDB" id="7QXU">
    <property type="method" value="EM"/>
    <property type="resolution" value="4.30 A"/>
    <property type="chains" value="d=2-350"/>
</dbReference>
<dbReference type="PDB" id="7QXW">
    <property type="method" value="EM"/>
    <property type="resolution" value="4.10 A"/>
    <property type="chains" value="d=2-350"/>
</dbReference>
<dbReference type="PDB" id="7QXX">
    <property type="method" value="EM"/>
    <property type="resolution" value="4.40 A"/>
    <property type="chains" value="d=2-350"/>
</dbReference>
<dbReference type="PDB" id="7QY7">
    <property type="method" value="EM"/>
    <property type="resolution" value="4.70 A"/>
    <property type="chains" value="d=2-350"/>
</dbReference>
<dbReference type="PDB" id="7QYA">
    <property type="method" value="EM"/>
    <property type="resolution" value="4.80 A"/>
    <property type="chains" value="d=2-350"/>
</dbReference>
<dbReference type="PDB" id="7QYB">
    <property type="method" value="EM"/>
    <property type="resolution" value="4.10 A"/>
    <property type="chains" value="d=2-350"/>
</dbReference>
<dbReference type="PDB" id="7W37">
    <property type="method" value="EM"/>
    <property type="resolution" value="3.00 A"/>
    <property type="chains" value="d=1-350"/>
</dbReference>
<dbReference type="PDB" id="7W38">
    <property type="method" value="EM"/>
    <property type="resolution" value="3.10 A"/>
    <property type="chains" value="d=1-350"/>
</dbReference>
<dbReference type="PDB" id="7W39">
    <property type="method" value="EM"/>
    <property type="resolution" value="3.20 A"/>
    <property type="chains" value="d=1-350"/>
</dbReference>
<dbReference type="PDB" id="7W3A">
    <property type="method" value="EM"/>
    <property type="resolution" value="3.50 A"/>
    <property type="chains" value="d=1-350"/>
</dbReference>
<dbReference type="PDB" id="7W3B">
    <property type="method" value="EM"/>
    <property type="resolution" value="3.60 A"/>
    <property type="chains" value="d=1-350"/>
</dbReference>
<dbReference type="PDB" id="7W3C">
    <property type="method" value="EM"/>
    <property type="resolution" value="3.40 A"/>
    <property type="chains" value="d=1-350"/>
</dbReference>
<dbReference type="PDB" id="7W3F">
    <property type="method" value="EM"/>
    <property type="resolution" value="3.30 A"/>
    <property type="chains" value="d=1-350"/>
</dbReference>
<dbReference type="PDB" id="7W3G">
    <property type="method" value="EM"/>
    <property type="resolution" value="3.20 A"/>
    <property type="chains" value="d=1-350"/>
</dbReference>
<dbReference type="PDB" id="7W3H">
    <property type="method" value="EM"/>
    <property type="resolution" value="3.20 A"/>
    <property type="chains" value="d=1-350"/>
</dbReference>
<dbReference type="PDB" id="7W3I">
    <property type="method" value="EM"/>
    <property type="resolution" value="3.50 A"/>
    <property type="chains" value="d=1-350"/>
</dbReference>
<dbReference type="PDB" id="7W3J">
    <property type="method" value="EM"/>
    <property type="resolution" value="3.50 A"/>
    <property type="chains" value="d=1-350"/>
</dbReference>
<dbReference type="PDB" id="7W3K">
    <property type="method" value="EM"/>
    <property type="resolution" value="3.60 A"/>
    <property type="chains" value="d=1-350"/>
</dbReference>
<dbReference type="PDB" id="7W3M">
    <property type="method" value="EM"/>
    <property type="resolution" value="3.50 A"/>
    <property type="chains" value="d=1-350"/>
</dbReference>
<dbReference type="PDB" id="8CVT">
    <property type="method" value="EM"/>
    <property type="resolution" value="3.00 A"/>
    <property type="chains" value="d=1-350"/>
</dbReference>
<dbReference type="PDB" id="8JRI">
    <property type="method" value="EM"/>
    <property type="resolution" value="3.40 A"/>
    <property type="chains" value="d=1-350"/>
</dbReference>
<dbReference type="PDB" id="8JRT">
    <property type="method" value="EM"/>
    <property type="resolution" value="3.60 A"/>
    <property type="chains" value="d=1-350"/>
</dbReference>
<dbReference type="PDB" id="8JTI">
    <property type="method" value="EM"/>
    <property type="resolution" value="3.80 A"/>
    <property type="chains" value="d=1-350"/>
</dbReference>
<dbReference type="PDB" id="8K0G">
    <property type="method" value="EM"/>
    <property type="resolution" value="3.80 A"/>
    <property type="chains" value="d=1-350"/>
</dbReference>
<dbReference type="PDB" id="8USB">
    <property type="method" value="EM"/>
    <property type="resolution" value="2.73 A"/>
    <property type="chains" value="d=1-350"/>
</dbReference>
<dbReference type="PDB" id="8USC">
    <property type="method" value="EM"/>
    <property type="resolution" value="3.10 A"/>
    <property type="chains" value="d=1-350"/>
</dbReference>
<dbReference type="PDB" id="9E8G">
    <property type="method" value="EM"/>
    <property type="resolution" value="3.01 A"/>
    <property type="chains" value="d=1-350"/>
</dbReference>
<dbReference type="PDB" id="9E8H">
    <property type="method" value="EM"/>
    <property type="resolution" value="2.90 A"/>
    <property type="chains" value="d=1-350"/>
</dbReference>
<dbReference type="PDB" id="9E8I">
    <property type="method" value="EM"/>
    <property type="resolution" value="2.87 A"/>
    <property type="chains" value="d=1-350"/>
</dbReference>
<dbReference type="PDB" id="9E8J">
    <property type="method" value="EM"/>
    <property type="resolution" value="3.47 A"/>
    <property type="chains" value="d=1-350"/>
</dbReference>
<dbReference type="PDB" id="9E8K">
    <property type="method" value="EM"/>
    <property type="resolution" value="4.08 A"/>
    <property type="chains" value="d=1-350"/>
</dbReference>
<dbReference type="PDB" id="9E8L">
    <property type="method" value="EM"/>
    <property type="resolution" value="3.59 A"/>
    <property type="chains" value="d=1-350"/>
</dbReference>
<dbReference type="PDB" id="9E8N">
    <property type="method" value="EM"/>
    <property type="resolution" value="3.62 A"/>
    <property type="chains" value="d=1-350"/>
</dbReference>
<dbReference type="PDB" id="9E8O">
    <property type="method" value="EM"/>
    <property type="resolution" value="3.10 A"/>
    <property type="chains" value="d=1-350"/>
</dbReference>
<dbReference type="PDB" id="9E8Q">
    <property type="method" value="EM"/>
    <property type="resolution" value="3.16 A"/>
    <property type="chains" value="d=1-350"/>
</dbReference>
<dbReference type="PDBsum" id="5GJQ"/>
<dbReference type="PDBsum" id="5GJR"/>
<dbReference type="PDBsum" id="5L4K"/>
<dbReference type="PDBsum" id="5LN3"/>
<dbReference type="PDBsum" id="5M32"/>
<dbReference type="PDBsum" id="5T0C"/>
<dbReference type="PDBsum" id="5T0G"/>
<dbReference type="PDBsum" id="5T0H"/>
<dbReference type="PDBsum" id="5T0I"/>
<dbReference type="PDBsum" id="5T0J"/>
<dbReference type="PDBsum" id="5VFP"/>
<dbReference type="PDBsum" id="5VFQ"/>
<dbReference type="PDBsum" id="5VFR"/>
<dbReference type="PDBsum" id="5VFS"/>
<dbReference type="PDBsum" id="5VFT"/>
<dbReference type="PDBsum" id="5VFU"/>
<dbReference type="PDBsum" id="5VGZ"/>
<dbReference type="PDBsum" id="5VHF"/>
<dbReference type="PDBsum" id="5VHH"/>
<dbReference type="PDBsum" id="5VHI"/>
<dbReference type="PDBsum" id="5VHS"/>
<dbReference type="PDBsum" id="6MSB"/>
<dbReference type="PDBsum" id="6MSD"/>
<dbReference type="PDBsum" id="6MSG"/>
<dbReference type="PDBsum" id="6MSH"/>
<dbReference type="PDBsum" id="6MSJ"/>
<dbReference type="PDBsum" id="6MSK"/>
<dbReference type="PDBsum" id="6WJD"/>
<dbReference type="PDBsum" id="6WJN"/>
<dbReference type="PDBsum" id="7QXN"/>
<dbReference type="PDBsum" id="7QXP"/>
<dbReference type="PDBsum" id="7QXU"/>
<dbReference type="PDBsum" id="7QXW"/>
<dbReference type="PDBsum" id="7QXX"/>
<dbReference type="PDBsum" id="7QY7"/>
<dbReference type="PDBsum" id="7QYA"/>
<dbReference type="PDBsum" id="7QYB"/>
<dbReference type="PDBsum" id="7W37"/>
<dbReference type="PDBsum" id="7W38"/>
<dbReference type="PDBsum" id="7W39"/>
<dbReference type="PDBsum" id="7W3A"/>
<dbReference type="PDBsum" id="7W3B"/>
<dbReference type="PDBsum" id="7W3C"/>
<dbReference type="PDBsum" id="7W3F"/>
<dbReference type="PDBsum" id="7W3G"/>
<dbReference type="PDBsum" id="7W3H"/>
<dbReference type="PDBsum" id="7W3I"/>
<dbReference type="PDBsum" id="7W3J"/>
<dbReference type="PDBsum" id="7W3K"/>
<dbReference type="PDBsum" id="7W3M"/>
<dbReference type="PDBsum" id="8CVT"/>
<dbReference type="PDBsum" id="8JRI"/>
<dbReference type="PDBsum" id="8JRT"/>
<dbReference type="PDBsum" id="8JTI"/>
<dbReference type="PDBsum" id="8K0G"/>
<dbReference type="PDBsum" id="8USB"/>
<dbReference type="PDBsum" id="8USC"/>
<dbReference type="PDBsum" id="9E8G"/>
<dbReference type="PDBsum" id="9E8H"/>
<dbReference type="PDBsum" id="9E8I"/>
<dbReference type="PDBsum" id="9E8J"/>
<dbReference type="PDBsum" id="9E8K"/>
<dbReference type="PDBsum" id="9E8L"/>
<dbReference type="PDBsum" id="9E8N"/>
<dbReference type="PDBsum" id="9E8O"/>
<dbReference type="PDBsum" id="9E8Q"/>
<dbReference type="EMDB" id="EMD-14201"/>
<dbReference type="EMDB" id="EMD-14202"/>
<dbReference type="EMDB" id="EMD-14203"/>
<dbReference type="EMDB" id="EMD-14204"/>
<dbReference type="EMDB" id="EMD-14205"/>
<dbReference type="EMDB" id="EMD-14209"/>
<dbReference type="EMDB" id="EMD-14210"/>
<dbReference type="EMDB" id="EMD-14211"/>
<dbReference type="EMDB" id="EMD-21691"/>
<dbReference type="EMDB" id="EMD-21696"/>
<dbReference type="EMDB" id="EMD-27018"/>
<dbReference type="EMDB" id="EMD-32272"/>
<dbReference type="EMDB" id="EMD-32273"/>
<dbReference type="EMDB" id="EMD-32274"/>
<dbReference type="EMDB" id="EMD-32275"/>
<dbReference type="EMDB" id="EMD-32276"/>
<dbReference type="EMDB" id="EMD-32277"/>
<dbReference type="EMDB" id="EMD-32278"/>
<dbReference type="EMDB" id="EMD-32279"/>
<dbReference type="EMDB" id="EMD-32280"/>
<dbReference type="EMDB" id="EMD-32281"/>
<dbReference type="EMDB" id="EMD-32282"/>
<dbReference type="EMDB" id="EMD-32283"/>
<dbReference type="EMDB" id="EMD-32284"/>
<dbReference type="EMDB" id="EMD-36598"/>
<dbReference type="EMDB" id="EMD-36605"/>
<dbReference type="EMDB" id="EMD-36645"/>
<dbReference type="EMDB" id="EMD-36764"/>
<dbReference type="EMDB" id="EMD-4089"/>
<dbReference type="EMDB" id="EMD-4146"/>
<dbReference type="EMDB" id="EMD-42506"/>
<dbReference type="EMDB" id="EMD-42507"/>
<dbReference type="EMDB" id="EMD-47719"/>
<dbReference type="EMDB" id="EMD-47720"/>
<dbReference type="EMDB" id="EMD-47721"/>
<dbReference type="EMDB" id="EMD-47722"/>
<dbReference type="EMDB" id="EMD-47723"/>
<dbReference type="EMDB" id="EMD-47724"/>
<dbReference type="EMDB" id="EMD-47725"/>
<dbReference type="EMDB" id="EMD-47726"/>
<dbReference type="EMDB" id="EMD-47727"/>
<dbReference type="EMDB" id="EMD-60138"/>
<dbReference type="EMDB" id="EMD-60139"/>
<dbReference type="EMDB" id="EMD-8663"/>
<dbReference type="EMDB" id="EMD-8664"/>
<dbReference type="EMDB" id="EMD-8665"/>
<dbReference type="EMDB" id="EMD-8666"/>
<dbReference type="EMDB" id="EMD-8667"/>
<dbReference type="EMDB" id="EMD-8668"/>
<dbReference type="EMDB" id="EMD-8672"/>
<dbReference type="EMDB" id="EMD-8674"/>
<dbReference type="EMDB" id="EMD-8675"/>
<dbReference type="EMDB" id="EMD-8676"/>
<dbReference type="EMDB" id="EMD-8684"/>
<dbReference type="EMDB" id="EMD-9216"/>
<dbReference type="EMDB" id="EMD-9217"/>
<dbReference type="EMDB" id="EMD-9218"/>
<dbReference type="EMDB" id="EMD-9219"/>
<dbReference type="EMDB" id="EMD-9220"/>
<dbReference type="EMDB" id="EMD-9221"/>
<dbReference type="EMDB" id="EMD-9222"/>
<dbReference type="EMDB" id="EMD-9511"/>
<dbReference type="EMDB" id="EMD-9512"/>
<dbReference type="SMR" id="P48556"/>
<dbReference type="BioGRID" id="111686">
    <property type="interactions" value="181"/>
</dbReference>
<dbReference type="ComplexPortal" id="CPX-5993">
    <property type="entry name" value="26S proteasome complex"/>
</dbReference>
<dbReference type="ComplexPortal" id="CPX-8964">
    <property type="entry name" value="19S proteasome regulatory complex"/>
</dbReference>
<dbReference type="ComplexPortal" id="CPX-9082">
    <property type="entry name" value="19S-20S-PA28-alphabeta hybrid proteasome complex"/>
</dbReference>
<dbReference type="ComplexPortal" id="CPX-9085">
    <property type="entry name" value="19S-20S-PA28-gamma hybrid proteasome complex"/>
</dbReference>
<dbReference type="ComplexPortal" id="CPX-9086">
    <property type="entry name" value="30S proteasome complex"/>
</dbReference>
<dbReference type="CORUM" id="P48556"/>
<dbReference type="FunCoup" id="P48556">
    <property type="interactions" value="2775"/>
</dbReference>
<dbReference type="IntAct" id="P48556">
    <property type="interactions" value="72"/>
</dbReference>
<dbReference type="MINT" id="P48556"/>
<dbReference type="STRING" id="9606.ENSP00000215071"/>
<dbReference type="ChEMBL" id="CHEMBL2364701"/>
<dbReference type="GlyGen" id="P48556">
    <property type="glycosylation" value="1 site, 1 O-linked glycan (1 site)"/>
</dbReference>
<dbReference type="iPTMnet" id="P48556"/>
<dbReference type="MetOSite" id="P48556"/>
<dbReference type="PhosphoSitePlus" id="P48556"/>
<dbReference type="SwissPalm" id="P48556"/>
<dbReference type="BioMuta" id="PSMD8"/>
<dbReference type="DMDM" id="308153477"/>
<dbReference type="jPOST" id="P48556"/>
<dbReference type="MassIVE" id="P48556"/>
<dbReference type="PaxDb" id="9606-ENSP00000215071"/>
<dbReference type="PeptideAtlas" id="P48556"/>
<dbReference type="ProteomicsDB" id="55910"/>
<dbReference type="Pumba" id="P48556"/>
<dbReference type="Antibodypedia" id="1714">
    <property type="antibodies" value="160 antibodies from 27 providers"/>
</dbReference>
<dbReference type="DNASU" id="5714"/>
<dbReference type="Ensembl" id="ENST00000215071.9">
    <property type="protein sequence ID" value="ENSP00000215071.4"/>
    <property type="gene ID" value="ENSG00000099341.13"/>
</dbReference>
<dbReference type="GeneID" id="5714"/>
<dbReference type="KEGG" id="hsa:5714"/>
<dbReference type="MANE-Select" id="ENST00000215071.9">
    <property type="protein sequence ID" value="ENSP00000215071.4"/>
    <property type="RefSeq nucleotide sequence ID" value="NM_002812.5"/>
    <property type="RefSeq protein sequence ID" value="NP_002803.2"/>
</dbReference>
<dbReference type="AGR" id="HGNC:9566"/>
<dbReference type="CTD" id="5714"/>
<dbReference type="DisGeNET" id="5714"/>
<dbReference type="GeneCards" id="PSMD8"/>
<dbReference type="HGNC" id="HGNC:9566">
    <property type="gene designation" value="PSMD8"/>
</dbReference>
<dbReference type="HPA" id="ENSG00000099341">
    <property type="expression patterns" value="Tissue enhanced (skeletal)"/>
</dbReference>
<dbReference type="MIM" id="617844">
    <property type="type" value="gene"/>
</dbReference>
<dbReference type="neXtProt" id="NX_P48556"/>
<dbReference type="OpenTargets" id="ENSG00000099341"/>
<dbReference type="PharmGKB" id="PA33912"/>
<dbReference type="VEuPathDB" id="HostDB:ENSG00000099341"/>
<dbReference type="eggNOG" id="KOG3151">
    <property type="taxonomic scope" value="Eukaryota"/>
</dbReference>
<dbReference type="GeneTree" id="ENSGT00390000014682"/>
<dbReference type="InParanoid" id="P48556"/>
<dbReference type="OMA" id="HIMDGYF"/>
<dbReference type="OrthoDB" id="409122at2759"/>
<dbReference type="PAN-GO" id="P48556">
    <property type="GO annotations" value="3 GO annotations based on evolutionary models"/>
</dbReference>
<dbReference type="PhylomeDB" id="P48556"/>
<dbReference type="TreeFam" id="TF106233"/>
<dbReference type="PathwayCommons" id="P48556"/>
<dbReference type="Reactome" id="R-HSA-1169091">
    <property type="pathway name" value="Activation of NF-kappaB in B cells"/>
</dbReference>
<dbReference type="Reactome" id="R-HSA-1234176">
    <property type="pathway name" value="Oxygen-dependent proline hydroxylation of Hypoxia-inducible Factor Alpha"/>
</dbReference>
<dbReference type="Reactome" id="R-HSA-1236974">
    <property type="pathway name" value="ER-Phagosome pathway"/>
</dbReference>
<dbReference type="Reactome" id="R-HSA-1236978">
    <property type="pathway name" value="Cross-presentation of soluble exogenous antigens (endosomes)"/>
</dbReference>
<dbReference type="Reactome" id="R-HSA-174084">
    <property type="pathway name" value="Autodegradation of Cdh1 by Cdh1:APC/C"/>
</dbReference>
<dbReference type="Reactome" id="R-HSA-174113">
    <property type="pathway name" value="SCF-beta-TrCP mediated degradation of Emi1"/>
</dbReference>
<dbReference type="Reactome" id="R-HSA-174154">
    <property type="pathway name" value="APC/C:Cdc20 mediated degradation of Securin"/>
</dbReference>
<dbReference type="Reactome" id="R-HSA-174178">
    <property type="pathway name" value="APC/C:Cdh1 mediated degradation of Cdc20 and other APC/C:Cdh1 targeted proteins in late mitosis/early G1"/>
</dbReference>
<dbReference type="Reactome" id="R-HSA-174184">
    <property type="pathway name" value="Cdc20:Phospho-APC/C mediated degradation of Cyclin A"/>
</dbReference>
<dbReference type="Reactome" id="R-HSA-180534">
    <property type="pathway name" value="Vpu mediated degradation of CD4"/>
</dbReference>
<dbReference type="Reactome" id="R-HSA-180585">
    <property type="pathway name" value="Vif-mediated degradation of APOBEC3G"/>
</dbReference>
<dbReference type="Reactome" id="R-HSA-187577">
    <property type="pathway name" value="SCF(Skp2)-mediated degradation of p27/p21"/>
</dbReference>
<dbReference type="Reactome" id="R-HSA-195253">
    <property type="pathway name" value="Degradation of beta-catenin by the destruction complex"/>
</dbReference>
<dbReference type="Reactome" id="R-HSA-202424">
    <property type="pathway name" value="Downstream TCR signaling"/>
</dbReference>
<dbReference type="Reactome" id="R-HSA-211733">
    <property type="pathway name" value="Regulation of activated PAK-2p34 by proteasome mediated degradation"/>
</dbReference>
<dbReference type="Reactome" id="R-HSA-2467813">
    <property type="pathway name" value="Separation of Sister Chromatids"/>
</dbReference>
<dbReference type="Reactome" id="R-HSA-2871837">
    <property type="pathway name" value="FCERI mediated NF-kB activation"/>
</dbReference>
<dbReference type="Reactome" id="R-HSA-349425">
    <property type="pathway name" value="Autodegradation of the E3 ubiquitin ligase COP1"/>
</dbReference>
<dbReference type="Reactome" id="R-HSA-350562">
    <property type="pathway name" value="Regulation of ornithine decarboxylase (ODC)"/>
</dbReference>
<dbReference type="Reactome" id="R-HSA-382556">
    <property type="pathway name" value="ABC-family proteins mediated transport"/>
</dbReference>
<dbReference type="Reactome" id="R-HSA-450408">
    <property type="pathway name" value="AUF1 (hnRNP D0) binds and destabilizes mRNA"/>
</dbReference>
<dbReference type="Reactome" id="R-HSA-4608870">
    <property type="pathway name" value="Asymmetric localization of PCP proteins"/>
</dbReference>
<dbReference type="Reactome" id="R-HSA-4641257">
    <property type="pathway name" value="Degradation of AXIN"/>
</dbReference>
<dbReference type="Reactome" id="R-HSA-4641258">
    <property type="pathway name" value="Degradation of DVL"/>
</dbReference>
<dbReference type="Reactome" id="R-HSA-5358346">
    <property type="pathway name" value="Hedgehog ligand biogenesis"/>
</dbReference>
<dbReference type="Reactome" id="R-HSA-5362768">
    <property type="pathway name" value="Hh mutants are degraded by ERAD"/>
</dbReference>
<dbReference type="Reactome" id="R-HSA-5607761">
    <property type="pathway name" value="Dectin-1 mediated noncanonical NF-kB signaling"/>
</dbReference>
<dbReference type="Reactome" id="R-HSA-5607764">
    <property type="pathway name" value="CLEC7A (Dectin-1) signaling"/>
</dbReference>
<dbReference type="Reactome" id="R-HSA-5610780">
    <property type="pathway name" value="Degradation of GLI1 by the proteasome"/>
</dbReference>
<dbReference type="Reactome" id="R-HSA-5610783">
    <property type="pathway name" value="Degradation of GLI2 by the proteasome"/>
</dbReference>
<dbReference type="Reactome" id="R-HSA-5610785">
    <property type="pathway name" value="GLI3 is processed to GLI3R by the proteasome"/>
</dbReference>
<dbReference type="Reactome" id="R-HSA-5632684">
    <property type="pathway name" value="Hedgehog 'on' state"/>
</dbReference>
<dbReference type="Reactome" id="R-HSA-5658442">
    <property type="pathway name" value="Regulation of RAS by GAPs"/>
</dbReference>
<dbReference type="Reactome" id="R-HSA-5668541">
    <property type="pathway name" value="TNFR2 non-canonical NF-kB pathway"/>
</dbReference>
<dbReference type="Reactome" id="R-HSA-5676590">
    <property type="pathway name" value="NIK--&gt;noncanonical NF-kB signaling"/>
</dbReference>
<dbReference type="Reactome" id="R-HSA-5678895">
    <property type="pathway name" value="Defective CFTR causes cystic fibrosis"/>
</dbReference>
<dbReference type="Reactome" id="R-HSA-5687128">
    <property type="pathway name" value="MAPK6/MAPK4 signaling"/>
</dbReference>
<dbReference type="Reactome" id="R-HSA-5689603">
    <property type="pathway name" value="UCH proteinases"/>
</dbReference>
<dbReference type="Reactome" id="R-HSA-5689880">
    <property type="pathway name" value="Ub-specific processing proteases"/>
</dbReference>
<dbReference type="Reactome" id="R-HSA-68867">
    <property type="pathway name" value="Assembly of the pre-replicative complex"/>
</dbReference>
<dbReference type="Reactome" id="R-HSA-68949">
    <property type="pathway name" value="Orc1 removal from chromatin"/>
</dbReference>
<dbReference type="Reactome" id="R-HSA-69017">
    <property type="pathway name" value="CDK-mediated phosphorylation and removal of Cdc6"/>
</dbReference>
<dbReference type="Reactome" id="R-HSA-69481">
    <property type="pathway name" value="G2/M Checkpoints"/>
</dbReference>
<dbReference type="Reactome" id="R-HSA-69601">
    <property type="pathway name" value="Ubiquitin Mediated Degradation of Phosphorylated Cdc25A"/>
</dbReference>
<dbReference type="Reactome" id="R-HSA-75815">
    <property type="pathway name" value="Ubiquitin-dependent degradation of Cyclin D"/>
</dbReference>
<dbReference type="Reactome" id="R-HSA-8852276">
    <property type="pathway name" value="The role of GTSE1 in G2/M progression after G2 checkpoint"/>
</dbReference>
<dbReference type="Reactome" id="R-HSA-8854050">
    <property type="pathway name" value="FBXL7 down-regulates AURKA during mitotic entry and in early mitosis"/>
</dbReference>
<dbReference type="Reactome" id="R-HSA-8939236">
    <property type="pathway name" value="RUNX1 regulates transcription of genes involved in differentiation of HSCs"/>
</dbReference>
<dbReference type="Reactome" id="R-HSA-8939902">
    <property type="pathway name" value="Regulation of RUNX2 expression and activity"/>
</dbReference>
<dbReference type="Reactome" id="R-HSA-8941858">
    <property type="pathway name" value="Regulation of RUNX3 expression and activity"/>
</dbReference>
<dbReference type="Reactome" id="R-HSA-8948751">
    <property type="pathway name" value="Regulation of PTEN stability and activity"/>
</dbReference>
<dbReference type="Reactome" id="R-HSA-8951664">
    <property type="pathway name" value="Neddylation"/>
</dbReference>
<dbReference type="Reactome" id="R-HSA-9010553">
    <property type="pathway name" value="Regulation of expression of SLITs and ROBOs"/>
</dbReference>
<dbReference type="Reactome" id="R-HSA-9020702">
    <property type="pathway name" value="Interleukin-1 signaling"/>
</dbReference>
<dbReference type="Reactome" id="R-HSA-9604323">
    <property type="pathway name" value="Negative regulation of NOTCH4 signaling"/>
</dbReference>
<dbReference type="Reactome" id="R-HSA-9755511">
    <property type="pathway name" value="KEAP1-NFE2L2 pathway"/>
</dbReference>
<dbReference type="Reactome" id="R-HSA-9762114">
    <property type="pathway name" value="GSK3B and BTRC:CUL1-mediated-degradation of NFE2L2"/>
</dbReference>
<dbReference type="Reactome" id="R-HSA-9824272">
    <property type="pathway name" value="Somitogenesis"/>
</dbReference>
<dbReference type="Reactome" id="R-HSA-983168">
    <property type="pathway name" value="Antigen processing: Ubiquitination &amp; Proteasome degradation"/>
</dbReference>
<dbReference type="Reactome" id="R-HSA-9907900">
    <property type="pathway name" value="Proteasome assembly"/>
</dbReference>
<dbReference type="SignaLink" id="P48556"/>
<dbReference type="SIGNOR" id="P48556"/>
<dbReference type="BioGRID-ORCS" id="5714">
    <property type="hits" value="550 hits in 1171 CRISPR screens"/>
</dbReference>
<dbReference type="ChiTaRS" id="PSMD8">
    <property type="organism name" value="human"/>
</dbReference>
<dbReference type="GeneWiki" id="PSMD8"/>
<dbReference type="GenomeRNAi" id="5714"/>
<dbReference type="Pharos" id="P48556">
    <property type="development level" value="Tbio"/>
</dbReference>
<dbReference type="PRO" id="PR:P48556"/>
<dbReference type="Proteomes" id="UP000005640">
    <property type="component" value="Chromosome 19"/>
</dbReference>
<dbReference type="RNAct" id="P48556">
    <property type="molecule type" value="protein"/>
</dbReference>
<dbReference type="Bgee" id="ENSG00000099341">
    <property type="expression patterns" value="Expressed in gastrocnemius and 212 other cell types or tissues"/>
</dbReference>
<dbReference type="ExpressionAtlas" id="P48556">
    <property type="expression patterns" value="baseline and differential"/>
</dbReference>
<dbReference type="GO" id="GO:0005829">
    <property type="term" value="C:cytosol"/>
    <property type="evidence" value="ECO:0000304"/>
    <property type="project" value="Reactome"/>
</dbReference>
<dbReference type="GO" id="GO:0005654">
    <property type="term" value="C:nucleoplasm"/>
    <property type="evidence" value="ECO:0000304"/>
    <property type="project" value="Reactome"/>
</dbReference>
<dbReference type="GO" id="GO:0005634">
    <property type="term" value="C:nucleus"/>
    <property type="evidence" value="ECO:0007005"/>
    <property type="project" value="UniProtKB"/>
</dbReference>
<dbReference type="GO" id="GO:0022624">
    <property type="term" value="C:proteasome accessory complex"/>
    <property type="evidence" value="ECO:0000250"/>
    <property type="project" value="UniProtKB"/>
</dbReference>
<dbReference type="GO" id="GO:0000502">
    <property type="term" value="C:proteasome complex"/>
    <property type="evidence" value="ECO:0000314"/>
    <property type="project" value="UniProtKB"/>
</dbReference>
<dbReference type="GO" id="GO:0005838">
    <property type="term" value="C:proteasome regulatory particle"/>
    <property type="evidence" value="ECO:0000304"/>
    <property type="project" value="ProtInc"/>
</dbReference>
<dbReference type="GO" id="GO:0008541">
    <property type="term" value="C:proteasome regulatory particle, lid subcomplex"/>
    <property type="evidence" value="ECO:0000250"/>
    <property type="project" value="FlyBase"/>
</dbReference>
<dbReference type="GO" id="GO:0043161">
    <property type="term" value="P:proteasome-mediated ubiquitin-dependent protein catabolic process"/>
    <property type="evidence" value="ECO:0000318"/>
    <property type="project" value="GO_Central"/>
</dbReference>
<dbReference type="FunFam" id="1.25.40.990:FF:000001">
    <property type="entry name" value="26S proteasome non-ATPase regulatory subunit"/>
    <property type="match status" value="1"/>
</dbReference>
<dbReference type="Gene3D" id="1.25.40.990">
    <property type="match status" value="1"/>
</dbReference>
<dbReference type="InterPro" id="IPR006746">
    <property type="entry name" value="26S_Psome_Rpn12"/>
</dbReference>
<dbReference type="InterPro" id="IPR033464">
    <property type="entry name" value="CSN8_PSD8_EIF3K"/>
</dbReference>
<dbReference type="InterPro" id="IPR000717">
    <property type="entry name" value="PCI_dom"/>
</dbReference>
<dbReference type="PANTHER" id="PTHR12387">
    <property type="entry name" value="26S PROTEASOME NON-ATPASE REGULATORY SUBUNIT 8"/>
    <property type="match status" value="1"/>
</dbReference>
<dbReference type="PANTHER" id="PTHR12387:SF0">
    <property type="entry name" value="26S PROTEASOME NON-ATPASE REGULATORY SUBUNIT 8"/>
    <property type="match status" value="1"/>
</dbReference>
<dbReference type="Pfam" id="PF10075">
    <property type="entry name" value="CSN8_PSD8_EIF3K"/>
    <property type="match status" value="1"/>
</dbReference>
<dbReference type="PROSITE" id="PS50250">
    <property type="entry name" value="PCI"/>
    <property type="match status" value="1"/>
</dbReference>
<protein>
    <recommendedName>
        <fullName>26S proteasome non-ATPase regulatory subunit 8</fullName>
    </recommendedName>
    <alternativeName>
        <fullName>26S proteasome regulatory subunit RPN12</fullName>
    </alternativeName>
    <alternativeName>
        <fullName>26S proteasome regulatory subunit S14</fullName>
    </alternativeName>
    <alternativeName>
        <fullName>p31</fullName>
    </alternativeName>
</protein>
<comment type="function">
    <text evidence="4">Component of the 26S proteasome, a multiprotein complex involved in the ATP-dependent degradation of ubiquitinated proteins. This complex plays a key role in the maintenance of protein homeostasis by removing misfolded or damaged proteins, which could impair cellular functions, and by removing proteins whose functions are no longer required. Therefore, the proteasome participates in numerous cellular processes, including cell cycle progression, apoptosis, or DNA damage repair.</text>
</comment>
<comment type="subunit">
    <text evidence="1 5 6 7">Component of the 19S proteasome regulatory particle complex. The 26S proteasome consists of a 20S core particle (CP) and two 19S regulatory subunits (RP). The regulatory particle is made of a lid composed of 9 subunits including PSMD8, a base containing 6 ATPases and few additional components. Interacts with DDI2 (PubMed:29290612). Interacts with TASOR (By similarity).</text>
</comment>
<comment type="interaction">
    <interactant intactId="EBI-359304">
        <id>P48556</id>
    </interactant>
    <interactant intactId="EBI-2255129">
        <id>P30041</id>
        <label>PRDX6</label>
    </interactant>
    <organismsDiffer>false</organismsDiffer>
    <experiments>3</experiments>
</comment>
<comment type="interaction">
    <interactant intactId="EBI-359304">
        <id>P48556</id>
    </interactant>
    <interactant intactId="EBI-359318">
        <id>P55036</id>
        <label>PSMD4</label>
    </interactant>
    <organismsDiffer>false</organismsDiffer>
    <experiments>2</experiments>
</comment>
<comment type="interaction">
    <interactant intactId="EBI-359304">
        <id>P48556</id>
    </interactant>
    <interactant intactId="EBI-79084">
        <id>Q92529</id>
        <label>SHC3</label>
    </interactant>
    <organismsDiffer>false</organismsDiffer>
    <experiments>3</experiments>
</comment>
<comment type="similarity">
    <text evidence="8">Belongs to the proteasome subunit S14 family.</text>
</comment>
<comment type="caution">
    <text evidence="8">It is uncertain whether Met-1 or Met-64 is the initiator.</text>
</comment>
<comment type="sequence caution" evidence="8">
    <conflict type="erroneous gene model prediction">
        <sequence resource="EMBL-CDS" id="AAC62833"/>
    </conflict>
</comment>
<comment type="sequence caution" evidence="8">
    <conflict type="erroneous initiation">
        <sequence resource="EMBL-CDS" id="AAH01164"/>
    </conflict>
    <text>Truncated N-terminus.</text>
</comment>
<comment type="sequence caution" evidence="8">
    <conflict type="erroneous initiation">
        <sequence resource="EMBL-CDS" id="AAH65006"/>
    </conflict>
    <text>Truncated N-terminus.</text>
</comment>
<comment type="sequence caution" evidence="8">
    <conflict type="erroneous initiation">
        <sequence resource="EMBL-CDS" id="BAA07237"/>
    </conflict>
    <text>Truncated N-terminus.</text>
</comment>
<keyword id="KW-0002">3D-structure</keyword>
<keyword id="KW-1017">Isopeptide bond</keyword>
<keyword id="KW-0597">Phosphoprotein</keyword>
<keyword id="KW-0647">Proteasome</keyword>
<keyword id="KW-1267">Proteomics identification</keyword>
<keyword id="KW-1185">Reference proteome</keyword>
<keyword id="KW-0832">Ubl conjugation</keyword>
<evidence type="ECO:0000250" key="1">
    <source>
        <dbReference type="UniProtKB" id="Q9CX56"/>
    </source>
</evidence>
<evidence type="ECO:0000255" key="2">
    <source>
        <dbReference type="PROSITE-ProRule" id="PRU01185"/>
    </source>
</evidence>
<evidence type="ECO:0000256" key="3">
    <source>
        <dbReference type="SAM" id="MobiDB-lite"/>
    </source>
</evidence>
<evidence type="ECO:0000269" key="4">
    <source>
    </source>
</evidence>
<evidence type="ECO:0000269" key="5">
    <source>
    </source>
</evidence>
<evidence type="ECO:0000269" key="6">
    <source>
    </source>
</evidence>
<evidence type="ECO:0000269" key="7">
    <source>
    </source>
</evidence>
<evidence type="ECO:0000305" key="8"/>
<evidence type="ECO:0007744" key="9">
    <source>
    </source>
</evidence>
<evidence type="ECO:0007744" key="10">
    <source>
    </source>
</evidence>
<evidence type="ECO:0007829" key="11">
    <source>
        <dbReference type="PDB" id="9E8J"/>
    </source>
</evidence>
<proteinExistence type="evidence at protein level"/>
<reference key="1">
    <citation type="journal article" date="2004" name="Nat. Genet.">
        <title>Complete sequencing and characterization of 21,243 full-length human cDNAs.</title>
        <authorList>
            <person name="Ota T."/>
            <person name="Suzuki Y."/>
            <person name="Nishikawa T."/>
            <person name="Otsuki T."/>
            <person name="Sugiyama T."/>
            <person name="Irie R."/>
            <person name="Wakamatsu A."/>
            <person name="Hayashi K."/>
            <person name="Sato H."/>
            <person name="Nagai K."/>
            <person name="Kimura K."/>
            <person name="Makita H."/>
            <person name="Sekine M."/>
            <person name="Obayashi M."/>
            <person name="Nishi T."/>
            <person name="Shibahara T."/>
            <person name="Tanaka T."/>
            <person name="Ishii S."/>
            <person name="Yamamoto J."/>
            <person name="Saito K."/>
            <person name="Kawai Y."/>
            <person name="Isono Y."/>
            <person name="Nakamura Y."/>
            <person name="Nagahari K."/>
            <person name="Murakami K."/>
            <person name="Yasuda T."/>
            <person name="Iwayanagi T."/>
            <person name="Wagatsuma M."/>
            <person name="Shiratori A."/>
            <person name="Sudo H."/>
            <person name="Hosoiri T."/>
            <person name="Kaku Y."/>
            <person name="Kodaira H."/>
            <person name="Kondo H."/>
            <person name="Sugawara M."/>
            <person name="Takahashi M."/>
            <person name="Kanda K."/>
            <person name="Yokoi T."/>
            <person name="Furuya T."/>
            <person name="Kikkawa E."/>
            <person name="Omura Y."/>
            <person name="Abe K."/>
            <person name="Kamihara K."/>
            <person name="Katsuta N."/>
            <person name="Sato K."/>
            <person name="Tanikawa M."/>
            <person name="Yamazaki M."/>
            <person name="Ninomiya K."/>
            <person name="Ishibashi T."/>
            <person name="Yamashita H."/>
            <person name="Murakawa K."/>
            <person name="Fujimori K."/>
            <person name="Tanai H."/>
            <person name="Kimata M."/>
            <person name="Watanabe M."/>
            <person name="Hiraoka S."/>
            <person name="Chiba Y."/>
            <person name="Ishida S."/>
            <person name="Ono Y."/>
            <person name="Takiguchi S."/>
            <person name="Watanabe S."/>
            <person name="Yosida M."/>
            <person name="Hotuta T."/>
            <person name="Kusano J."/>
            <person name="Kanehori K."/>
            <person name="Takahashi-Fujii A."/>
            <person name="Hara H."/>
            <person name="Tanase T.-O."/>
            <person name="Nomura Y."/>
            <person name="Togiya S."/>
            <person name="Komai F."/>
            <person name="Hara R."/>
            <person name="Takeuchi K."/>
            <person name="Arita M."/>
            <person name="Imose N."/>
            <person name="Musashino K."/>
            <person name="Yuuki H."/>
            <person name="Oshima A."/>
            <person name="Sasaki N."/>
            <person name="Aotsuka S."/>
            <person name="Yoshikawa Y."/>
            <person name="Matsunawa H."/>
            <person name="Ichihara T."/>
            <person name="Shiohata N."/>
            <person name="Sano S."/>
            <person name="Moriya S."/>
            <person name="Momiyama H."/>
            <person name="Satoh N."/>
            <person name="Takami S."/>
            <person name="Terashima Y."/>
            <person name="Suzuki O."/>
            <person name="Nakagawa S."/>
            <person name="Senoh A."/>
            <person name="Mizoguchi H."/>
            <person name="Goto Y."/>
            <person name="Shimizu F."/>
            <person name="Wakebe H."/>
            <person name="Hishigaki H."/>
            <person name="Watanabe T."/>
            <person name="Sugiyama A."/>
            <person name="Takemoto M."/>
            <person name="Kawakami B."/>
            <person name="Yamazaki M."/>
            <person name="Watanabe K."/>
            <person name="Kumagai A."/>
            <person name="Itakura S."/>
            <person name="Fukuzumi Y."/>
            <person name="Fujimori Y."/>
            <person name="Komiyama M."/>
            <person name="Tashiro H."/>
            <person name="Tanigami A."/>
            <person name="Fujiwara T."/>
            <person name="Ono T."/>
            <person name="Yamada K."/>
            <person name="Fujii Y."/>
            <person name="Ozaki K."/>
            <person name="Hirao M."/>
            <person name="Ohmori Y."/>
            <person name="Kawabata A."/>
            <person name="Hikiji T."/>
            <person name="Kobatake N."/>
            <person name="Inagaki H."/>
            <person name="Ikema Y."/>
            <person name="Okamoto S."/>
            <person name="Okitani R."/>
            <person name="Kawakami T."/>
            <person name="Noguchi S."/>
            <person name="Itoh T."/>
            <person name="Shigeta K."/>
            <person name="Senba T."/>
            <person name="Matsumura K."/>
            <person name="Nakajima Y."/>
            <person name="Mizuno T."/>
            <person name="Morinaga M."/>
            <person name="Sasaki M."/>
            <person name="Togashi T."/>
            <person name="Oyama M."/>
            <person name="Hata H."/>
            <person name="Watanabe M."/>
            <person name="Komatsu T."/>
            <person name="Mizushima-Sugano J."/>
            <person name="Satoh T."/>
            <person name="Shirai Y."/>
            <person name="Takahashi Y."/>
            <person name="Nakagawa K."/>
            <person name="Okumura K."/>
            <person name="Nagase T."/>
            <person name="Nomura N."/>
            <person name="Kikuchi H."/>
            <person name="Masuho Y."/>
            <person name="Yamashita R."/>
            <person name="Nakai K."/>
            <person name="Yada T."/>
            <person name="Nakamura Y."/>
            <person name="Ohara O."/>
            <person name="Isogai T."/>
            <person name="Sugano S."/>
        </authorList>
    </citation>
    <scope>NUCLEOTIDE SEQUENCE [LARGE SCALE MRNA]</scope>
    <source>
        <tissue>Testis</tissue>
    </source>
</reference>
<reference key="2">
    <citation type="journal article" date="2004" name="Nature">
        <title>The DNA sequence and biology of human chromosome 19.</title>
        <authorList>
            <person name="Grimwood J."/>
            <person name="Gordon L.A."/>
            <person name="Olsen A.S."/>
            <person name="Terry A."/>
            <person name="Schmutz J."/>
            <person name="Lamerdin J.E."/>
            <person name="Hellsten U."/>
            <person name="Goodstein D."/>
            <person name="Couronne O."/>
            <person name="Tran-Gyamfi M."/>
            <person name="Aerts A."/>
            <person name="Altherr M."/>
            <person name="Ashworth L."/>
            <person name="Bajorek E."/>
            <person name="Black S."/>
            <person name="Branscomb E."/>
            <person name="Caenepeel S."/>
            <person name="Carrano A.V."/>
            <person name="Caoile C."/>
            <person name="Chan Y.M."/>
            <person name="Christensen M."/>
            <person name="Cleland C.A."/>
            <person name="Copeland A."/>
            <person name="Dalin E."/>
            <person name="Dehal P."/>
            <person name="Denys M."/>
            <person name="Detter J.C."/>
            <person name="Escobar J."/>
            <person name="Flowers D."/>
            <person name="Fotopulos D."/>
            <person name="Garcia C."/>
            <person name="Georgescu A.M."/>
            <person name="Glavina T."/>
            <person name="Gomez M."/>
            <person name="Gonzales E."/>
            <person name="Groza M."/>
            <person name="Hammon N."/>
            <person name="Hawkins T."/>
            <person name="Haydu L."/>
            <person name="Ho I."/>
            <person name="Huang W."/>
            <person name="Israni S."/>
            <person name="Jett J."/>
            <person name="Kadner K."/>
            <person name="Kimball H."/>
            <person name="Kobayashi A."/>
            <person name="Larionov V."/>
            <person name="Leem S.-H."/>
            <person name="Lopez F."/>
            <person name="Lou Y."/>
            <person name="Lowry S."/>
            <person name="Malfatti S."/>
            <person name="Martinez D."/>
            <person name="McCready P.M."/>
            <person name="Medina C."/>
            <person name="Morgan J."/>
            <person name="Nelson K."/>
            <person name="Nolan M."/>
            <person name="Ovcharenko I."/>
            <person name="Pitluck S."/>
            <person name="Pollard M."/>
            <person name="Popkie A.P."/>
            <person name="Predki P."/>
            <person name="Quan G."/>
            <person name="Ramirez L."/>
            <person name="Rash S."/>
            <person name="Retterer J."/>
            <person name="Rodriguez A."/>
            <person name="Rogers S."/>
            <person name="Salamov A."/>
            <person name="Salazar A."/>
            <person name="She X."/>
            <person name="Smith D."/>
            <person name="Slezak T."/>
            <person name="Solovyev V."/>
            <person name="Thayer N."/>
            <person name="Tice H."/>
            <person name="Tsai M."/>
            <person name="Ustaszewska A."/>
            <person name="Vo N."/>
            <person name="Wagner M."/>
            <person name="Wheeler J."/>
            <person name="Wu K."/>
            <person name="Xie G."/>
            <person name="Yang J."/>
            <person name="Dubchak I."/>
            <person name="Furey T.S."/>
            <person name="DeJong P."/>
            <person name="Dickson M."/>
            <person name="Gordon D."/>
            <person name="Eichler E.E."/>
            <person name="Pennacchio L.A."/>
            <person name="Richardson P."/>
            <person name="Stubbs L."/>
            <person name="Rokhsar D.S."/>
            <person name="Myers R.M."/>
            <person name="Rubin E.M."/>
            <person name="Lucas S.M."/>
        </authorList>
    </citation>
    <scope>NUCLEOTIDE SEQUENCE [LARGE SCALE GENOMIC DNA]</scope>
</reference>
<reference key="3">
    <citation type="submission" date="2005-07" db="EMBL/GenBank/DDBJ databases">
        <authorList>
            <person name="Mural R.J."/>
            <person name="Istrail S."/>
            <person name="Sutton G.G."/>
            <person name="Florea L."/>
            <person name="Halpern A.L."/>
            <person name="Mobarry C.M."/>
            <person name="Lippert R."/>
            <person name="Walenz B."/>
            <person name="Shatkay H."/>
            <person name="Dew I."/>
            <person name="Miller J.R."/>
            <person name="Flanigan M.J."/>
            <person name="Edwards N.J."/>
            <person name="Bolanos R."/>
            <person name="Fasulo D."/>
            <person name="Halldorsson B.V."/>
            <person name="Hannenhalli S."/>
            <person name="Turner R."/>
            <person name="Yooseph S."/>
            <person name="Lu F."/>
            <person name="Nusskern D.R."/>
            <person name="Shue B.C."/>
            <person name="Zheng X.H."/>
            <person name="Zhong F."/>
            <person name="Delcher A.L."/>
            <person name="Huson D.H."/>
            <person name="Kravitz S.A."/>
            <person name="Mouchard L."/>
            <person name="Reinert K."/>
            <person name="Remington K.A."/>
            <person name="Clark A.G."/>
            <person name="Waterman M.S."/>
            <person name="Eichler E.E."/>
            <person name="Adams M.D."/>
            <person name="Hunkapiller M.W."/>
            <person name="Myers E.W."/>
            <person name="Venter J.C."/>
        </authorList>
    </citation>
    <scope>NUCLEOTIDE SEQUENCE [LARGE SCALE GENOMIC DNA]</scope>
</reference>
<reference key="4">
    <citation type="journal article" date="2004" name="Genome Res.">
        <title>The status, quality, and expansion of the NIH full-length cDNA project: the Mammalian Gene Collection (MGC).</title>
        <authorList>
            <consortium name="The MGC Project Team"/>
        </authorList>
    </citation>
    <scope>NUCLEOTIDE SEQUENCE [LARGE SCALE MRNA] OF 67-350</scope>
    <source>
        <tissue>Muscle</tissue>
        <tissue>Skin</tissue>
    </source>
</reference>
<reference key="5">
    <citation type="journal article" date="1995" name="EMBO J.">
        <title>Nin1p, a regulatory subunit of the 26S proteasome, is necessary for activation of Cdc28p kinase of Saccharomyces cerevisiae.</title>
        <authorList>
            <person name="Kominami K."/>
            <person name="DeMartino G.N."/>
            <person name="Moomaw C."/>
            <person name="Slaughter C.A."/>
            <person name="Shimbara N."/>
            <person name="Fujimuro M."/>
            <person name="Yokosawa H."/>
            <person name="Hisamatsu H."/>
            <person name="Tanahashi N."/>
            <person name="Shimizu Y."/>
            <person name="Tanaka K."/>
            <person name="Toh-e A."/>
        </authorList>
    </citation>
    <scope>NUCLEOTIDE SEQUENCE [MRNA] OF 71-350</scope>
</reference>
<reference key="6">
    <citation type="journal article" date="1992" name="Eur. J. Biochem.">
        <title>Demonstration that a human 26S proteolytic complex consists of a proteasome and multiple associated protein components and hydrolyzes ATP and ubiquitin-ligated proteins by closely linked mechanisms.</title>
        <authorList>
            <person name="Kanayama H.O."/>
            <person name="Tamura T."/>
            <person name="Ugai S."/>
            <person name="Kagawa S."/>
            <person name="Tanahashi N."/>
            <person name="Yoshimura T."/>
            <person name="Tanaka K."/>
            <person name="Ichihara A."/>
        </authorList>
    </citation>
    <scope>FUNCTION</scope>
</reference>
<reference key="7">
    <citation type="journal article" date="2007" name="Biochemistry">
        <title>Mass spectrometric characterization of the affinity-purified human 26S proteasome complex.</title>
        <authorList>
            <person name="Wang X."/>
            <person name="Chen C.-F."/>
            <person name="Baker P.R."/>
            <person name="Chen P.-L."/>
            <person name="Kaiser P."/>
            <person name="Huang L."/>
        </authorList>
    </citation>
    <scope>IDENTIFICATION BY MASS SPECTROMETRY [LARGE SCALE ANALYSIS]</scope>
    <source>
        <tissue>Embryonic kidney</tissue>
    </source>
</reference>
<reference key="8">
    <citation type="journal article" date="2011" name="BMC Syst. Biol.">
        <title>Initial characterization of the human central proteome.</title>
        <authorList>
            <person name="Burkard T.R."/>
            <person name="Planyavsky M."/>
            <person name="Kaupe I."/>
            <person name="Breitwieser F.P."/>
            <person name="Buerckstuemmer T."/>
            <person name="Bennett K.L."/>
            <person name="Superti-Furga G."/>
            <person name="Colinge J."/>
        </authorList>
    </citation>
    <scope>IDENTIFICATION BY MASS SPECTROMETRY [LARGE SCALE ANALYSIS]</scope>
</reference>
<reference key="9">
    <citation type="journal article" date="2013" name="J. Proteome Res.">
        <title>Toward a comprehensive characterization of a human cancer cell phosphoproteome.</title>
        <authorList>
            <person name="Zhou H."/>
            <person name="Di Palma S."/>
            <person name="Preisinger C."/>
            <person name="Peng M."/>
            <person name="Polat A.N."/>
            <person name="Heck A.J."/>
            <person name="Mohammed S."/>
        </authorList>
    </citation>
    <scope>PHOSPHORYLATION [LARGE SCALE ANALYSIS] AT SER-106</scope>
    <scope>IDENTIFICATION BY MASS SPECTROMETRY [LARGE SCALE ANALYSIS]</scope>
    <source>
        <tissue>Cervix carcinoma</tissue>
        <tissue>Erythroleukemia</tissue>
    </source>
</reference>
<reference key="10">
    <citation type="journal article" date="2017" name="Nat. Struct. Mol. Biol.">
        <title>Site-specific mapping of the human SUMO proteome reveals co-modification with phosphorylation.</title>
        <authorList>
            <person name="Hendriks I.A."/>
            <person name="Lyon D."/>
            <person name="Young C."/>
            <person name="Jensen L.J."/>
            <person name="Vertegaal A.C."/>
            <person name="Nielsen M.L."/>
        </authorList>
    </citation>
    <scope>SUMOYLATION [LARGE SCALE ANALYSIS] AT LYS-297</scope>
    <scope>IDENTIFICATION BY MASS SPECTROMETRY [LARGE SCALE ANALYSIS]</scope>
</reference>
<reference key="11">
    <citation type="journal article" date="2018" name="Mol. Cell">
        <title>Removal of RTF2 from Stalled Replisomes Promotes Maintenance of Genome Integrity.</title>
        <authorList>
            <person name="Kottemann M.C."/>
            <person name="Conti B.A."/>
            <person name="Lach F.P."/>
            <person name="Smogorzewska A."/>
        </authorList>
    </citation>
    <scope>INTERACTION WITH DDI2</scope>
</reference>
<reference key="12">
    <citation type="journal article" date="2016" name="Nat. Struct. Mol. Biol.">
        <title>An atomic structure of the human 26S proteasome.</title>
        <authorList>
            <person name="Huang X."/>
            <person name="Luan B."/>
            <person name="Wu J."/>
            <person name="Shi Y."/>
        </authorList>
    </citation>
    <scope>STRUCTURE BY ELECTRON MICROSCOPY (3.50 ANGSTROMS)</scope>
    <scope>SUBUNIT</scope>
</reference>
<reference key="13">
    <citation type="journal article" date="2016" name="Proc. Natl. Acad. Sci. U.S.A.">
        <title>Structure of the human 26S proteasome at a resolution of 3.9 Aa.</title>
        <authorList>
            <person name="Schweitzer A."/>
            <person name="Aufderheide A."/>
            <person name="Rudack T."/>
            <person name="Beck F."/>
            <person name="Pfeifer G."/>
            <person name="Plitzko J.M."/>
            <person name="Sakata E."/>
            <person name="Schulten K."/>
            <person name="Foerster F."/>
            <person name="Baumeister W."/>
        </authorList>
    </citation>
    <scope>STRUCTURE BY ELECTRON MICROSCOPY (4.50 ANGSTROMS)</scope>
    <scope>SUBUNIT</scope>
</reference>
<sequence length="350" mass="39612">MFIKGRAPRAPPRERRRATRGGLRQVVAPPRALGSTSRPHFRRASVCRRRCRKSGGLLAASRKMAAAAVNGAAGFSSSGPAATSGAVLQAATGMYEQLKGEWNRKSPNLSKCGEELGRLKLVLLELNFLPTTGTKLTKQQLILARDILEIGAQWSILRKDIPSFERYMAQLKCYYFDYKEQLPESAYMHQLLGLNLLFLLSQNRVAEFHTELERLPAKDIQTNVYIKHPVSLEQYLMEGSYNKVFLAKGNIPAESYTFFIDILLDTIRDEIAGCIEKAYEKILFTEATRILFFNTPKKMTDYAKKRGWVLGPNNYYSFASQQQKPEDTTIPSTELAKQVIEYARQLEMIV</sequence>